<gene>
    <name evidence="1" type="primary">phnW2</name>
    <name type="ordered locus">Bcep18194_A6497</name>
</gene>
<reference key="1">
    <citation type="submission" date="2005-10" db="EMBL/GenBank/DDBJ databases">
        <title>Complete sequence of chromosome 1 of Burkholderia sp. 383.</title>
        <authorList>
            <consortium name="US DOE Joint Genome Institute"/>
            <person name="Copeland A."/>
            <person name="Lucas S."/>
            <person name="Lapidus A."/>
            <person name="Barry K."/>
            <person name="Detter J.C."/>
            <person name="Glavina T."/>
            <person name="Hammon N."/>
            <person name="Israni S."/>
            <person name="Pitluck S."/>
            <person name="Chain P."/>
            <person name="Malfatti S."/>
            <person name="Shin M."/>
            <person name="Vergez L."/>
            <person name="Schmutz J."/>
            <person name="Larimer F."/>
            <person name="Land M."/>
            <person name="Kyrpides N."/>
            <person name="Lykidis A."/>
            <person name="Richardson P."/>
        </authorList>
    </citation>
    <scope>NUCLEOTIDE SEQUENCE [LARGE SCALE GENOMIC DNA]</scope>
    <source>
        <strain>ATCC 17760 / DSM 23089 / LMG 22485 / NCIMB 9086 / R18194 / 383</strain>
    </source>
</reference>
<evidence type="ECO:0000255" key="1">
    <source>
        <dbReference type="HAMAP-Rule" id="MF_01376"/>
    </source>
</evidence>
<evidence type="ECO:0000305" key="2"/>
<organism>
    <name type="scientific">Burkholderia lata (strain ATCC 17760 / DSM 23089 / LMG 22485 / NCIMB 9086 / R18194 / 383)</name>
    <dbReference type="NCBI Taxonomy" id="482957"/>
    <lineage>
        <taxon>Bacteria</taxon>
        <taxon>Pseudomonadati</taxon>
        <taxon>Pseudomonadota</taxon>
        <taxon>Betaproteobacteria</taxon>
        <taxon>Burkholderiales</taxon>
        <taxon>Burkholderiaceae</taxon>
        <taxon>Burkholderia</taxon>
        <taxon>Burkholderia cepacia complex</taxon>
    </lineage>
</organism>
<accession>Q39BS5</accession>
<dbReference type="EC" id="2.6.1.37" evidence="1"/>
<dbReference type="EMBL" id="CP000151">
    <property type="protein sequence ID" value="ABB10091.1"/>
    <property type="molecule type" value="Genomic_DNA"/>
</dbReference>
<dbReference type="RefSeq" id="WP_011353592.1">
    <property type="nucleotide sequence ID" value="NC_007510.1"/>
</dbReference>
<dbReference type="SMR" id="Q39BS5"/>
<dbReference type="GeneID" id="45096369"/>
<dbReference type="KEGG" id="bur:Bcep18194_A6497"/>
<dbReference type="PATRIC" id="fig|482957.22.peg.3529"/>
<dbReference type="HOGENOM" id="CLU_027686_3_1_4"/>
<dbReference type="Proteomes" id="UP000002705">
    <property type="component" value="Chromosome 1"/>
</dbReference>
<dbReference type="GO" id="GO:0047304">
    <property type="term" value="F:2-aminoethylphosphonate-pyruvate transaminase activity"/>
    <property type="evidence" value="ECO:0007669"/>
    <property type="project" value="UniProtKB-UniRule"/>
</dbReference>
<dbReference type="GO" id="GO:0019700">
    <property type="term" value="P:organic phosphonate catabolic process"/>
    <property type="evidence" value="ECO:0007669"/>
    <property type="project" value="InterPro"/>
</dbReference>
<dbReference type="Gene3D" id="3.90.1150.10">
    <property type="entry name" value="Aspartate Aminotransferase, domain 1"/>
    <property type="match status" value="1"/>
</dbReference>
<dbReference type="Gene3D" id="3.40.640.10">
    <property type="entry name" value="Type I PLP-dependent aspartate aminotransferase-like (Major domain)"/>
    <property type="match status" value="1"/>
</dbReference>
<dbReference type="HAMAP" id="MF_01376">
    <property type="entry name" value="PhnW_aminotrans_5"/>
    <property type="match status" value="1"/>
</dbReference>
<dbReference type="InterPro" id="IPR000192">
    <property type="entry name" value="Aminotrans_V_dom"/>
</dbReference>
<dbReference type="InterPro" id="IPR012703">
    <property type="entry name" value="NH2EtPonate_pyrv_transaminase"/>
</dbReference>
<dbReference type="InterPro" id="IPR015424">
    <property type="entry name" value="PyrdxlP-dep_Trfase"/>
</dbReference>
<dbReference type="InterPro" id="IPR015421">
    <property type="entry name" value="PyrdxlP-dep_Trfase_major"/>
</dbReference>
<dbReference type="InterPro" id="IPR015422">
    <property type="entry name" value="PyrdxlP-dep_Trfase_small"/>
</dbReference>
<dbReference type="InterPro" id="IPR024169">
    <property type="entry name" value="SP_NH2Trfase/AEP_transaminase"/>
</dbReference>
<dbReference type="NCBIfam" id="TIGR03301">
    <property type="entry name" value="PhnW-AepZ"/>
    <property type="match status" value="1"/>
</dbReference>
<dbReference type="NCBIfam" id="NF010006">
    <property type="entry name" value="PRK13479.1"/>
    <property type="match status" value="1"/>
</dbReference>
<dbReference type="NCBIfam" id="TIGR02326">
    <property type="entry name" value="transamin_PhnW"/>
    <property type="match status" value="1"/>
</dbReference>
<dbReference type="PANTHER" id="PTHR42778">
    <property type="entry name" value="2-AMINOETHYLPHOSPHONATE--PYRUVATE TRANSAMINASE"/>
    <property type="match status" value="1"/>
</dbReference>
<dbReference type="PANTHER" id="PTHR42778:SF1">
    <property type="entry name" value="2-AMINOETHYLPHOSPHONATE--PYRUVATE TRANSAMINASE"/>
    <property type="match status" value="1"/>
</dbReference>
<dbReference type="Pfam" id="PF00266">
    <property type="entry name" value="Aminotran_5"/>
    <property type="match status" value="1"/>
</dbReference>
<dbReference type="PIRSF" id="PIRSF000524">
    <property type="entry name" value="SPT"/>
    <property type="match status" value="1"/>
</dbReference>
<dbReference type="SUPFAM" id="SSF53383">
    <property type="entry name" value="PLP-dependent transferases"/>
    <property type="match status" value="1"/>
</dbReference>
<keyword id="KW-0032">Aminotransferase</keyword>
<keyword id="KW-0663">Pyridoxal phosphate</keyword>
<keyword id="KW-0670">Pyruvate</keyword>
<keyword id="KW-0808">Transferase</keyword>
<comment type="function">
    <text evidence="1">Involved in phosphonate degradation.</text>
</comment>
<comment type="catalytic activity">
    <reaction evidence="1">
        <text>(2-aminoethyl)phosphonate + pyruvate = phosphonoacetaldehyde + L-alanine</text>
        <dbReference type="Rhea" id="RHEA:17021"/>
        <dbReference type="ChEBI" id="CHEBI:15361"/>
        <dbReference type="ChEBI" id="CHEBI:57418"/>
        <dbReference type="ChEBI" id="CHEBI:57972"/>
        <dbReference type="ChEBI" id="CHEBI:58383"/>
        <dbReference type="EC" id="2.6.1.37"/>
    </reaction>
</comment>
<comment type="cofactor">
    <cofactor evidence="1">
        <name>pyridoxal 5'-phosphate</name>
        <dbReference type="ChEBI" id="CHEBI:597326"/>
    </cofactor>
</comment>
<comment type="subunit">
    <text evidence="1">Homodimer.</text>
</comment>
<comment type="similarity">
    <text evidence="1">Belongs to the class-V pyridoxal-phosphate-dependent aminotransferase family. PhnW subfamily.</text>
</comment>
<comment type="caution">
    <text evidence="2">The second enzyme involved in phosphonate degradation (PhnX, EC 3.11.1.1) is not found in this organism. The function of this enzyme is therefore uncertain.</text>
</comment>
<feature type="chain" id="PRO_0000286765" description="2-aminoethylphosphonate--pyruvate transaminase 2">
    <location>
        <begin position="1"/>
        <end position="376"/>
    </location>
</feature>
<feature type="modified residue" description="N6-(pyridoxal phosphate)lysine" evidence="1">
    <location>
        <position position="194"/>
    </location>
</feature>
<name>PHNW2_BURL3</name>
<proteinExistence type="inferred from homology"/>
<sequence>MTLAAQPILLTPGPLTTSDTTRDAMLRDWGSWDSDFNAITARLRERLLQIVHGEGTHECVPLQGSGTFSVEAAIGTLVPRDGHVLVPNNGAYCQRIAKICRVLGRQLTTIDYSEDRRVDPADVERALAADPTITHVALVHCETGAGVLNPLHDIAQVVAKHGRALIVDAMSSFGAIDIDARTTPFDAVIAASGKCLEGVPGLGFVIAKRSTLERCEGNSHSLAMDLYDQWVYMQRTTQWRFTPPTHVVAALDAAVGQYVDEGGLAARGGRYQRNYRALIDGMLALGFRPFLDPAIQAPIIVTFHAPDDPNYDFKRFYQEVKKRGYILYPGKLTEVETFRVGCIGHFGEAGIPGAVAAIADTLRAMGVRRVSAEAAA</sequence>
<protein>
    <recommendedName>
        <fullName evidence="1">2-aminoethylphosphonate--pyruvate transaminase 2</fullName>
        <ecNumber evidence="1">2.6.1.37</ecNumber>
    </recommendedName>
    <alternativeName>
        <fullName evidence="1">2-aminoethylphosphonate aminotransferase 2</fullName>
    </alternativeName>
    <alternativeName>
        <fullName evidence="1">AEP transaminase 2</fullName>
        <shortName evidence="1">AEPT 2</shortName>
    </alternativeName>
</protein>